<feature type="chain" id="PRO_5000374630" description="ATP synthase subunit b">
    <location>
        <begin position="1"/>
        <end position="200"/>
    </location>
</feature>
<feature type="transmembrane region" description="Helical" evidence="1">
    <location>
        <begin position="12"/>
        <end position="32"/>
    </location>
</feature>
<keyword id="KW-0066">ATP synthesis</keyword>
<keyword id="KW-0997">Cell inner membrane</keyword>
<keyword id="KW-1003">Cell membrane</keyword>
<keyword id="KW-0138">CF(0)</keyword>
<keyword id="KW-0375">Hydrogen ion transport</keyword>
<keyword id="KW-0406">Ion transport</keyword>
<keyword id="KW-0472">Membrane</keyword>
<keyword id="KW-1185">Reference proteome</keyword>
<keyword id="KW-0812">Transmembrane</keyword>
<keyword id="KW-1133">Transmembrane helix</keyword>
<keyword id="KW-0813">Transport</keyword>
<reference key="1">
    <citation type="submission" date="2008-05" db="EMBL/GenBank/DDBJ databases">
        <title>Complete sequence of chromosome of Geobacter lovleyi SZ.</title>
        <authorList>
            <consortium name="US DOE Joint Genome Institute"/>
            <person name="Lucas S."/>
            <person name="Copeland A."/>
            <person name="Lapidus A."/>
            <person name="Glavina del Rio T."/>
            <person name="Dalin E."/>
            <person name="Tice H."/>
            <person name="Bruce D."/>
            <person name="Goodwin L."/>
            <person name="Pitluck S."/>
            <person name="Chertkov O."/>
            <person name="Meincke L."/>
            <person name="Brettin T."/>
            <person name="Detter J.C."/>
            <person name="Han C."/>
            <person name="Tapia R."/>
            <person name="Kuske C.R."/>
            <person name="Schmutz J."/>
            <person name="Larimer F."/>
            <person name="Land M."/>
            <person name="Hauser L."/>
            <person name="Kyrpides N."/>
            <person name="Mikhailova N."/>
            <person name="Sung Y."/>
            <person name="Fletcher K.E."/>
            <person name="Ritalahti K.M."/>
            <person name="Loeffler F.E."/>
            <person name="Richardson P."/>
        </authorList>
    </citation>
    <scope>NUCLEOTIDE SEQUENCE [LARGE SCALE GENOMIC DNA]</scope>
    <source>
        <strain>ATCC BAA-1151 / DSM 17278 / SZ</strain>
    </source>
</reference>
<organism>
    <name type="scientific">Trichlorobacter lovleyi (strain ATCC BAA-1151 / DSM 17278 / SZ)</name>
    <name type="common">Geobacter lovleyi</name>
    <dbReference type="NCBI Taxonomy" id="398767"/>
    <lineage>
        <taxon>Bacteria</taxon>
        <taxon>Pseudomonadati</taxon>
        <taxon>Thermodesulfobacteriota</taxon>
        <taxon>Desulfuromonadia</taxon>
        <taxon>Geobacterales</taxon>
        <taxon>Geobacteraceae</taxon>
        <taxon>Trichlorobacter</taxon>
    </lineage>
</organism>
<gene>
    <name evidence="1" type="primary">atpF</name>
    <name type="ordered locus">Glov_3174</name>
</gene>
<dbReference type="EMBL" id="CP001089">
    <property type="protein sequence ID" value="ACD96880.1"/>
    <property type="molecule type" value="Genomic_DNA"/>
</dbReference>
<dbReference type="RefSeq" id="WP_012471204.1">
    <property type="nucleotide sequence ID" value="NC_010814.1"/>
</dbReference>
<dbReference type="SMR" id="B3EA05"/>
<dbReference type="STRING" id="398767.Glov_3174"/>
<dbReference type="KEGG" id="glo:Glov_3174"/>
<dbReference type="eggNOG" id="COG0711">
    <property type="taxonomic scope" value="Bacteria"/>
</dbReference>
<dbReference type="HOGENOM" id="CLU_079215_3_2_7"/>
<dbReference type="OrthoDB" id="5471016at2"/>
<dbReference type="Proteomes" id="UP000002420">
    <property type="component" value="Chromosome"/>
</dbReference>
<dbReference type="GO" id="GO:0005886">
    <property type="term" value="C:plasma membrane"/>
    <property type="evidence" value="ECO:0007669"/>
    <property type="project" value="UniProtKB-SubCell"/>
</dbReference>
<dbReference type="GO" id="GO:0045259">
    <property type="term" value="C:proton-transporting ATP synthase complex"/>
    <property type="evidence" value="ECO:0007669"/>
    <property type="project" value="UniProtKB-KW"/>
</dbReference>
<dbReference type="GO" id="GO:0046933">
    <property type="term" value="F:proton-transporting ATP synthase activity, rotational mechanism"/>
    <property type="evidence" value="ECO:0007669"/>
    <property type="project" value="UniProtKB-UniRule"/>
</dbReference>
<dbReference type="CDD" id="cd06503">
    <property type="entry name" value="ATP-synt_Fo_b"/>
    <property type="match status" value="1"/>
</dbReference>
<dbReference type="HAMAP" id="MF_01398">
    <property type="entry name" value="ATP_synth_b_bprime"/>
    <property type="match status" value="1"/>
</dbReference>
<dbReference type="InterPro" id="IPR002146">
    <property type="entry name" value="ATP_synth_b/b'su_bac/chlpt"/>
</dbReference>
<dbReference type="PANTHER" id="PTHR34264">
    <property type="entry name" value="ATP SYNTHASE SUBUNIT B, CHLOROPLASTIC"/>
    <property type="match status" value="1"/>
</dbReference>
<dbReference type="PANTHER" id="PTHR34264:SF3">
    <property type="entry name" value="ATP SYNTHASE SUBUNIT B, CHLOROPLASTIC"/>
    <property type="match status" value="1"/>
</dbReference>
<dbReference type="Pfam" id="PF00430">
    <property type="entry name" value="ATP-synt_B"/>
    <property type="match status" value="1"/>
</dbReference>
<evidence type="ECO:0000255" key="1">
    <source>
        <dbReference type="HAMAP-Rule" id="MF_01398"/>
    </source>
</evidence>
<accession>B3EA05</accession>
<protein>
    <recommendedName>
        <fullName evidence="1">ATP synthase subunit b</fullName>
    </recommendedName>
    <alternativeName>
        <fullName evidence="1">ATP synthase F(0) sector subunit b</fullName>
    </alternativeName>
    <alternativeName>
        <fullName evidence="1">ATPase subunit I</fullName>
    </alternativeName>
    <alternativeName>
        <fullName evidence="1">F-type ATPase subunit b</fullName>
        <shortName evidence="1">F-ATPase subunit b</shortName>
    </alternativeName>
</protein>
<sequence>MLIQNDRRMQRILSGLAVAVAILVPVLALASGGGEHHPDSGAQLKDFGWRVVDFALLAGIMIWALKKANVKGSLAERQLQIEKNLREAREARETAEAKLKEYTEKLEKANQEVDTLRAAMLKEAEAEKQRIVAEAQAAAAKVTEQAAQAADQEVLKARTELRVEAARLAVELAGGKLGAAVQKADHDRFVQDYLGKVVQL</sequence>
<proteinExistence type="inferred from homology"/>
<name>ATPF_TRIL1</name>
<comment type="function">
    <text evidence="1">F(1)F(0) ATP synthase produces ATP from ADP in the presence of a proton or sodium gradient. F-type ATPases consist of two structural domains, F(1) containing the extramembraneous catalytic core and F(0) containing the membrane proton channel, linked together by a central stalk and a peripheral stalk. During catalysis, ATP synthesis in the catalytic domain of F(1) is coupled via a rotary mechanism of the central stalk subunits to proton translocation.</text>
</comment>
<comment type="function">
    <text evidence="1">Component of the F(0) channel, it forms part of the peripheral stalk, linking F(1) to F(0).</text>
</comment>
<comment type="subunit">
    <text evidence="1">F-type ATPases have 2 components, F(1) - the catalytic core - and F(0) - the membrane proton channel. F(1) has five subunits: alpha(3), beta(3), gamma(1), delta(1), epsilon(1). F(0) has three main subunits: a(1), b(2) and c(10-14). The alpha and beta chains form an alternating ring which encloses part of the gamma chain. F(1) is attached to F(0) by a central stalk formed by the gamma and epsilon chains, while a peripheral stalk is formed by the delta and b chains.</text>
</comment>
<comment type="subcellular location">
    <subcellularLocation>
        <location evidence="1">Cell inner membrane</location>
        <topology evidence="1">Single-pass membrane protein</topology>
    </subcellularLocation>
</comment>
<comment type="similarity">
    <text evidence="1">Belongs to the ATPase B chain family.</text>
</comment>